<feature type="chain" id="PRO_0000131737" description="Protein translocase subunit SecY">
    <location>
        <begin position="1" status="less than"/>
        <end position="182"/>
    </location>
</feature>
<feature type="transmembrane region" description="Helical" evidence="2">
    <location>
        <begin position="30"/>
        <end position="50"/>
    </location>
</feature>
<feature type="transmembrane region" description="Helical" evidence="2">
    <location>
        <begin position="92"/>
        <end position="112"/>
    </location>
</feature>
<feature type="transmembrane region" description="Helical" evidence="2">
    <location>
        <begin position="119"/>
        <end position="139"/>
    </location>
</feature>
<feature type="region of interest" description="Disordered" evidence="3">
    <location>
        <begin position="163"/>
        <end position="182"/>
    </location>
</feature>
<feature type="compositionally biased region" description="Basic residues" evidence="3">
    <location>
        <begin position="166"/>
        <end position="182"/>
    </location>
</feature>
<feature type="non-terminal residue">
    <location>
        <position position="1"/>
    </location>
</feature>
<gene>
    <name type="primary">secY</name>
</gene>
<organism>
    <name type="scientific">Paracoccus denitrificans</name>
    <dbReference type="NCBI Taxonomy" id="266"/>
    <lineage>
        <taxon>Bacteria</taxon>
        <taxon>Pseudomonadati</taxon>
        <taxon>Pseudomonadota</taxon>
        <taxon>Alphaproteobacteria</taxon>
        <taxon>Rhodobacterales</taxon>
        <taxon>Paracoccaceae</taxon>
        <taxon>Paracoccus</taxon>
    </lineage>
</organism>
<reference key="1">
    <citation type="journal article" date="1998" name="Protein Eng.">
        <title>Metal chelating properties of adenylate kinase from Paracoccus denitrificans.</title>
        <authorList>
            <person name="Perrier V."/>
            <person name="Burlacu-Miron S."/>
            <person name="Boussac A."/>
            <person name="Meier A."/>
            <person name="Gilles A.M."/>
        </authorList>
    </citation>
    <scope>NUCLEOTIDE SEQUENCE [GENOMIC DNA]</scope>
    <source>
        <strain>ATCC 17741 / DSM 413 / NBRC 16712 / NCCB 22021 / NCIMB 11627</strain>
    </source>
</reference>
<name>SECY_PARDE</name>
<sequence length="182" mass="19854">IFASSLLLLPVTISTFSGNQTGPIMSTVLAYFGPGQPLYLLFFAAMIVFFTYFYTYNVSFKTEDVAENLKNQGGFIPGIRPGKRTEDYLTYVVTRVLVIGSAYLAFVCLLPAARDHPRPAGDPLLLGGTSVLIVVSVVMDTINQVQSHLLAHQYEGLIEKSQLPGKRGKTGAAKPRKAPARR</sequence>
<dbReference type="EMBL" id="U64202">
    <property type="protein sequence ID" value="AAB06327.1"/>
    <property type="molecule type" value="Genomic_DNA"/>
</dbReference>
<dbReference type="GO" id="GO:0005886">
    <property type="term" value="C:plasma membrane"/>
    <property type="evidence" value="ECO:0007669"/>
    <property type="project" value="UniProtKB-SubCell"/>
</dbReference>
<dbReference type="GO" id="GO:0015031">
    <property type="term" value="P:protein transport"/>
    <property type="evidence" value="ECO:0007669"/>
    <property type="project" value="UniProtKB-KW"/>
</dbReference>
<dbReference type="Gene3D" id="1.10.3370.10">
    <property type="entry name" value="SecY subunit domain"/>
    <property type="match status" value="1"/>
</dbReference>
<dbReference type="InterPro" id="IPR002208">
    <property type="entry name" value="SecY/SEC61-alpha"/>
</dbReference>
<dbReference type="InterPro" id="IPR023201">
    <property type="entry name" value="SecY_dom_sf"/>
</dbReference>
<dbReference type="PANTHER" id="PTHR10906">
    <property type="entry name" value="SECY/SEC61-ALPHA FAMILY MEMBER"/>
    <property type="match status" value="1"/>
</dbReference>
<dbReference type="Pfam" id="PF00344">
    <property type="entry name" value="SecY"/>
    <property type="match status" value="1"/>
</dbReference>
<dbReference type="PRINTS" id="PR00303">
    <property type="entry name" value="SECYTRNLCASE"/>
</dbReference>
<dbReference type="SUPFAM" id="SSF103491">
    <property type="entry name" value="Preprotein translocase SecY subunit"/>
    <property type="match status" value="1"/>
</dbReference>
<evidence type="ECO:0000250" key="1"/>
<evidence type="ECO:0000255" key="2"/>
<evidence type="ECO:0000256" key="3">
    <source>
        <dbReference type="SAM" id="MobiDB-lite"/>
    </source>
</evidence>
<evidence type="ECO:0000305" key="4"/>
<keyword id="KW-1003">Cell membrane</keyword>
<keyword id="KW-0472">Membrane</keyword>
<keyword id="KW-0653">Protein transport</keyword>
<keyword id="KW-0811">Translocation</keyword>
<keyword id="KW-0812">Transmembrane</keyword>
<keyword id="KW-1133">Transmembrane helix</keyword>
<keyword id="KW-0813">Transport</keyword>
<accession>P72179</accession>
<proteinExistence type="inferred from homology"/>
<comment type="function">
    <text evidence="1">The central subunit of the protein translocation channel SecYEG. Consists of two halves formed by TMs 1-5 and 6-10. These two domains form a lateral gate at the front which open onto the bilayer between TMs 2 and 7, and are clamped together by SecE at the back. The channel is closed by both a pore ring composed of hydrophobic SecY resides and a short helix (helix 2A) on the extracellular side of the membrane which forms a plug. The plug probably moves laterally to allow the channel to open. The ring and the pore may move independently (By similarity).</text>
</comment>
<comment type="subunit">
    <text evidence="1">Component of the Sec protein translocase complex. Heterotrimer consisting of SecY, SecE and SecG subunits. The heterotrimers can form oligomers, although 1 heterotrimer is thought to be able to translocate proteins. Interacts with the ribosome. Interacts with SecDF, and other proteins may be involved. Interacts with SecA (By similarity).</text>
</comment>
<comment type="subcellular location">
    <subcellularLocation>
        <location evidence="1">Cell membrane</location>
        <topology evidence="1">Multi-pass membrane protein</topology>
    </subcellularLocation>
</comment>
<comment type="similarity">
    <text evidence="4">Belongs to the SecY/SEC61-alpha family.</text>
</comment>
<protein>
    <recommendedName>
        <fullName>Protein translocase subunit SecY</fullName>
    </recommendedName>
</protein>